<proteinExistence type="inferred from homology"/>
<keyword id="KW-0028">Amino-acid biosynthesis</keyword>
<keyword id="KW-0963">Cytoplasm</keyword>
<keyword id="KW-0521">NADP</keyword>
<keyword id="KW-0560">Oxidoreductase</keyword>
<keyword id="KW-0641">Proline biosynthesis</keyword>
<sequence length="422" mass="45275">MSNNEFLNKLGEQAKKASYALASLTGQQKTALLRCIASKLTDAKANIIAANQQDVEQAKANGLSEAMIDRLLLDEPRLLSVIADIDNVIGLTDPVGSEIDSRLLDNGLRLSRRRVPLGVIGVIYEARPNVTVDIAVLALKTGNAVILRGGKETLASNKALCKVIRSAMAEQGLPEDCVQLIDNPDRSLVSGLLKLDKYVDMIVPRGGQNLQRLCAEQATIPVILGGIGICHLFVDVQADLDKAVAVIENAKVQRPTVCNALDTVLVHQTNAASFIPALCQQLATKGVSFYGCAQTQAVMANNEQQIMQATDESYSTEWLSLTLGIKVVGSLEEAVAHIRQYSSGHSESILTDNIHTASEFMNAVDSAAVYVNASTRFTDGGEFGLGAEVAVSTQKLHARGPMGLEALTTYKWLAWGDYTVRG</sequence>
<gene>
    <name evidence="1" type="primary">proA</name>
    <name type="ordered locus">swp_1193</name>
</gene>
<name>PROA_SHEPW</name>
<organism>
    <name type="scientific">Shewanella piezotolerans (strain WP3 / JCM 13877)</name>
    <dbReference type="NCBI Taxonomy" id="225849"/>
    <lineage>
        <taxon>Bacteria</taxon>
        <taxon>Pseudomonadati</taxon>
        <taxon>Pseudomonadota</taxon>
        <taxon>Gammaproteobacteria</taxon>
        <taxon>Alteromonadales</taxon>
        <taxon>Shewanellaceae</taxon>
        <taxon>Shewanella</taxon>
    </lineage>
</organism>
<comment type="function">
    <text evidence="1">Catalyzes the NADPH-dependent reduction of L-glutamate 5-phosphate into L-glutamate 5-semialdehyde and phosphate. The product spontaneously undergoes cyclization to form 1-pyrroline-5-carboxylate.</text>
</comment>
<comment type="catalytic activity">
    <reaction evidence="1">
        <text>L-glutamate 5-semialdehyde + phosphate + NADP(+) = L-glutamyl 5-phosphate + NADPH + H(+)</text>
        <dbReference type="Rhea" id="RHEA:19541"/>
        <dbReference type="ChEBI" id="CHEBI:15378"/>
        <dbReference type="ChEBI" id="CHEBI:43474"/>
        <dbReference type="ChEBI" id="CHEBI:57783"/>
        <dbReference type="ChEBI" id="CHEBI:58066"/>
        <dbReference type="ChEBI" id="CHEBI:58274"/>
        <dbReference type="ChEBI" id="CHEBI:58349"/>
        <dbReference type="EC" id="1.2.1.41"/>
    </reaction>
</comment>
<comment type="pathway">
    <text evidence="1">Amino-acid biosynthesis; L-proline biosynthesis; L-glutamate 5-semialdehyde from L-glutamate: step 2/2.</text>
</comment>
<comment type="subcellular location">
    <subcellularLocation>
        <location evidence="1">Cytoplasm</location>
    </subcellularLocation>
</comment>
<comment type="similarity">
    <text evidence="1">Belongs to the gamma-glutamyl phosphate reductase family.</text>
</comment>
<accession>B8CKF0</accession>
<reference key="1">
    <citation type="journal article" date="2008" name="PLoS ONE">
        <title>Environmental adaptation: genomic analysis of the piezotolerant and psychrotolerant deep-sea iron reducing bacterium Shewanella piezotolerans WP3.</title>
        <authorList>
            <person name="Wang F."/>
            <person name="Wang J."/>
            <person name="Jian H."/>
            <person name="Zhang B."/>
            <person name="Li S."/>
            <person name="Wang F."/>
            <person name="Zeng X."/>
            <person name="Gao L."/>
            <person name="Bartlett D.H."/>
            <person name="Yu J."/>
            <person name="Hu S."/>
            <person name="Xiao X."/>
        </authorList>
    </citation>
    <scope>NUCLEOTIDE SEQUENCE [LARGE SCALE GENOMIC DNA]</scope>
    <source>
        <strain>WP3 / JCM 13877</strain>
    </source>
</reference>
<evidence type="ECO:0000255" key="1">
    <source>
        <dbReference type="HAMAP-Rule" id="MF_00412"/>
    </source>
</evidence>
<protein>
    <recommendedName>
        <fullName evidence="1">Gamma-glutamyl phosphate reductase</fullName>
        <shortName evidence="1">GPR</shortName>
        <ecNumber evidence="1">1.2.1.41</ecNumber>
    </recommendedName>
    <alternativeName>
        <fullName evidence="1">Glutamate-5-semialdehyde dehydrogenase</fullName>
    </alternativeName>
    <alternativeName>
        <fullName evidence="1">Glutamyl-gamma-semialdehyde dehydrogenase</fullName>
        <shortName evidence="1">GSA dehydrogenase</shortName>
    </alternativeName>
</protein>
<dbReference type="EC" id="1.2.1.41" evidence="1"/>
<dbReference type="EMBL" id="CP000472">
    <property type="protein sequence ID" value="ACJ27989.1"/>
    <property type="molecule type" value="Genomic_DNA"/>
</dbReference>
<dbReference type="RefSeq" id="WP_020911367.1">
    <property type="nucleotide sequence ID" value="NC_011566.1"/>
</dbReference>
<dbReference type="SMR" id="B8CKF0"/>
<dbReference type="STRING" id="225849.swp_1193"/>
<dbReference type="KEGG" id="swp:swp_1193"/>
<dbReference type="eggNOG" id="COG0014">
    <property type="taxonomic scope" value="Bacteria"/>
</dbReference>
<dbReference type="HOGENOM" id="CLU_030231_0_0_6"/>
<dbReference type="OrthoDB" id="9809970at2"/>
<dbReference type="UniPathway" id="UPA00098">
    <property type="reaction ID" value="UER00360"/>
</dbReference>
<dbReference type="Proteomes" id="UP000000753">
    <property type="component" value="Chromosome"/>
</dbReference>
<dbReference type="GO" id="GO:0005737">
    <property type="term" value="C:cytoplasm"/>
    <property type="evidence" value="ECO:0007669"/>
    <property type="project" value="UniProtKB-SubCell"/>
</dbReference>
<dbReference type="GO" id="GO:0004350">
    <property type="term" value="F:glutamate-5-semialdehyde dehydrogenase activity"/>
    <property type="evidence" value="ECO:0007669"/>
    <property type="project" value="UniProtKB-UniRule"/>
</dbReference>
<dbReference type="GO" id="GO:0050661">
    <property type="term" value="F:NADP binding"/>
    <property type="evidence" value="ECO:0007669"/>
    <property type="project" value="InterPro"/>
</dbReference>
<dbReference type="GO" id="GO:0055129">
    <property type="term" value="P:L-proline biosynthetic process"/>
    <property type="evidence" value="ECO:0007669"/>
    <property type="project" value="UniProtKB-UniRule"/>
</dbReference>
<dbReference type="CDD" id="cd07079">
    <property type="entry name" value="ALDH_F18-19_ProA-GPR"/>
    <property type="match status" value="1"/>
</dbReference>
<dbReference type="FunFam" id="3.40.309.10:FF:000006">
    <property type="entry name" value="Gamma-glutamyl phosphate reductase"/>
    <property type="match status" value="1"/>
</dbReference>
<dbReference type="Gene3D" id="3.40.605.10">
    <property type="entry name" value="Aldehyde Dehydrogenase, Chain A, domain 1"/>
    <property type="match status" value="1"/>
</dbReference>
<dbReference type="Gene3D" id="3.40.309.10">
    <property type="entry name" value="Aldehyde Dehydrogenase, Chain A, domain 2"/>
    <property type="match status" value="1"/>
</dbReference>
<dbReference type="HAMAP" id="MF_00412">
    <property type="entry name" value="ProA"/>
    <property type="match status" value="1"/>
</dbReference>
<dbReference type="InterPro" id="IPR016161">
    <property type="entry name" value="Ald_DH/histidinol_DH"/>
</dbReference>
<dbReference type="InterPro" id="IPR016163">
    <property type="entry name" value="Ald_DH_C"/>
</dbReference>
<dbReference type="InterPro" id="IPR016162">
    <property type="entry name" value="Ald_DH_N"/>
</dbReference>
<dbReference type="InterPro" id="IPR015590">
    <property type="entry name" value="Aldehyde_DH_dom"/>
</dbReference>
<dbReference type="InterPro" id="IPR020593">
    <property type="entry name" value="G-glutamylP_reductase_CS"/>
</dbReference>
<dbReference type="InterPro" id="IPR012134">
    <property type="entry name" value="Glu-5-SA_DH"/>
</dbReference>
<dbReference type="InterPro" id="IPR000965">
    <property type="entry name" value="GPR_dom"/>
</dbReference>
<dbReference type="NCBIfam" id="NF001221">
    <property type="entry name" value="PRK00197.1"/>
    <property type="match status" value="1"/>
</dbReference>
<dbReference type="NCBIfam" id="TIGR00407">
    <property type="entry name" value="proA"/>
    <property type="match status" value="1"/>
</dbReference>
<dbReference type="PANTHER" id="PTHR11063:SF8">
    <property type="entry name" value="DELTA-1-PYRROLINE-5-CARBOXYLATE SYNTHASE"/>
    <property type="match status" value="1"/>
</dbReference>
<dbReference type="PANTHER" id="PTHR11063">
    <property type="entry name" value="GLUTAMATE SEMIALDEHYDE DEHYDROGENASE"/>
    <property type="match status" value="1"/>
</dbReference>
<dbReference type="Pfam" id="PF00171">
    <property type="entry name" value="Aldedh"/>
    <property type="match status" value="1"/>
</dbReference>
<dbReference type="PIRSF" id="PIRSF000151">
    <property type="entry name" value="GPR"/>
    <property type="match status" value="1"/>
</dbReference>
<dbReference type="SUPFAM" id="SSF53720">
    <property type="entry name" value="ALDH-like"/>
    <property type="match status" value="1"/>
</dbReference>
<dbReference type="PROSITE" id="PS01223">
    <property type="entry name" value="PROA"/>
    <property type="match status" value="1"/>
</dbReference>
<feature type="chain" id="PRO_1000193653" description="Gamma-glutamyl phosphate reductase">
    <location>
        <begin position="1"/>
        <end position="422"/>
    </location>
</feature>